<name>TCPE_MACFA</name>
<comment type="function">
    <text evidence="1">Component of the chaperonin-containing T-complex (TRiC), a molecular chaperone complex that assists the folding of actin, tubulin and other proteins upon ATP hydrolysis. The TRiC complex mediates the folding of WRAP53/TCAB1, thereby regulating telomere maintenance. As part of the TRiC complex may play a role in the assembly of BBSome, a complex involved in ciliogenesis regulating transports vesicles to the cilia.</text>
</comment>
<comment type="catalytic activity">
    <reaction evidence="1">
        <text>ATP + H2O = ADP + phosphate + H(+)</text>
        <dbReference type="Rhea" id="RHEA:13065"/>
        <dbReference type="ChEBI" id="CHEBI:15377"/>
        <dbReference type="ChEBI" id="CHEBI:15378"/>
        <dbReference type="ChEBI" id="CHEBI:30616"/>
        <dbReference type="ChEBI" id="CHEBI:43474"/>
        <dbReference type="ChEBI" id="CHEBI:456216"/>
    </reaction>
</comment>
<comment type="subunit">
    <text evidence="1 2">Component of the chaperonin-containing T-complex (TRiC), a hexadecamer composed of two identical back-to-back stacked rings enclosing a protein folding chamber. Each ring is made up of eight different subunits: TCP1/CCT1, CCT2, CCT3, CCT4, CCT5, CCT6A/CCT6, CCT7, CCT8. Interacts with PACRG (By similarity). Interacts with DNAAF4 (By similarity). Interacts with DLEC1 (By similarity). Interacts with SPMAP2 (By similarity).</text>
</comment>
<comment type="subcellular location">
    <subcellularLocation>
        <location evidence="1">Cytoplasm</location>
    </subcellularLocation>
    <subcellularLocation>
        <location evidence="1">Cytoplasm</location>
        <location evidence="1">Cytoskeleton</location>
        <location evidence="1">Microtubule organizing center</location>
        <location evidence="1">Centrosome</location>
    </subcellularLocation>
</comment>
<comment type="PTM">
    <text evidence="1">Ubiquitinated by the DCX(DCAF12) complex specifically recognizes the diglutamate (Glu-Glu) at the C-terminus, leading to its degradation.</text>
</comment>
<comment type="similarity">
    <text evidence="3">Belongs to the TCP-1 chaperonin family.</text>
</comment>
<organism>
    <name type="scientific">Macaca fascicularis</name>
    <name type="common">Crab-eating macaque</name>
    <name type="synonym">Cynomolgus monkey</name>
    <dbReference type="NCBI Taxonomy" id="9541"/>
    <lineage>
        <taxon>Eukaryota</taxon>
        <taxon>Metazoa</taxon>
        <taxon>Chordata</taxon>
        <taxon>Craniata</taxon>
        <taxon>Vertebrata</taxon>
        <taxon>Euteleostomi</taxon>
        <taxon>Mammalia</taxon>
        <taxon>Eutheria</taxon>
        <taxon>Euarchontoglires</taxon>
        <taxon>Primates</taxon>
        <taxon>Haplorrhini</taxon>
        <taxon>Catarrhini</taxon>
        <taxon>Cercopithecidae</taxon>
        <taxon>Cercopithecinae</taxon>
        <taxon>Macaca</taxon>
    </lineage>
</organism>
<protein>
    <recommendedName>
        <fullName>T-complex protein 1 subunit epsilon</fullName>
        <shortName>TCP-1-epsilon</shortName>
        <ecNumber evidence="1">3.6.1.-</ecNumber>
    </recommendedName>
    <alternativeName>
        <fullName>CCT-epsilon</fullName>
    </alternativeName>
</protein>
<dbReference type="EC" id="3.6.1.-" evidence="1"/>
<dbReference type="EMBL" id="AB169078">
    <property type="protein sequence ID" value="BAE01172.1"/>
    <property type="molecule type" value="mRNA"/>
</dbReference>
<dbReference type="RefSeq" id="NP_001270949.1">
    <property type="nucleotide sequence ID" value="NM_001284020.1"/>
</dbReference>
<dbReference type="RefSeq" id="XP_045249468.1">
    <property type="nucleotide sequence ID" value="XM_045393533.2"/>
</dbReference>
<dbReference type="SMR" id="Q4R6V2"/>
<dbReference type="STRING" id="9541.ENSMFAP00000039533"/>
<dbReference type="Ensembl" id="ENSMFAT00000013796.2">
    <property type="protein sequence ID" value="ENSMFAP00000039533.1"/>
    <property type="gene ID" value="ENSMFAG00000045954.2"/>
</dbReference>
<dbReference type="GeneID" id="101926268"/>
<dbReference type="VEuPathDB" id="HostDB:ENSMFAG00000045954"/>
<dbReference type="eggNOG" id="KOG0357">
    <property type="taxonomic scope" value="Eukaryota"/>
</dbReference>
<dbReference type="GeneTree" id="ENSGT00550000074988"/>
<dbReference type="OMA" id="SHPQMPH"/>
<dbReference type="OrthoDB" id="10248520at2759"/>
<dbReference type="Proteomes" id="UP000233100">
    <property type="component" value="Chromosome 6"/>
</dbReference>
<dbReference type="Bgee" id="ENSMFAG00000045954">
    <property type="expression patterns" value="Expressed in colon and 13 other cell types or tissues"/>
</dbReference>
<dbReference type="GO" id="GO:0044297">
    <property type="term" value="C:cell body"/>
    <property type="evidence" value="ECO:0007669"/>
    <property type="project" value="Ensembl"/>
</dbReference>
<dbReference type="GO" id="GO:0005813">
    <property type="term" value="C:centrosome"/>
    <property type="evidence" value="ECO:0007669"/>
    <property type="project" value="UniProtKB-SubCell"/>
</dbReference>
<dbReference type="GO" id="GO:0005832">
    <property type="term" value="C:chaperonin-containing T-complex"/>
    <property type="evidence" value="ECO:0000250"/>
    <property type="project" value="UniProtKB"/>
</dbReference>
<dbReference type="GO" id="GO:0005874">
    <property type="term" value="C:microtubule"/>
    <property type="evidence" value="ECO:0007669"/>
    <property type="project" value="Ensembl"/>
</dbReference>
<dbReference type="GO" id="GO:0005524">
    <property type="term" value="F:ATP binding"/>
    <property type="evidence" value="ECO:0007669"/>
    <property type="project" value="UniProtKB-KW"/>
</dbReference>
<dbReference type="GO" id="GO:0016887">
    <property type="term" value="F:ATP hydrolysis activity"/>
    <property type="evidence" value="ECO:0007669"/>
    <property type="project" value="InterPro"/>
</dbReference>
<dbReference type="GO" id="GO:0140662">
    <property type="term" value="F:ATP-dependent protein folding chaperone"/>
    <property type="evidence" value="ECO:0007669"/>
    <property type="project" value="InterPro"/>
</dbReference>
<dbReference type="GO" id="GO:0048487">
    <property type="term" value="F:beta-tubulin binding"/>
    <property type="evidence" value="ECO:0007669"/>
    <property type="project" value="Ensembl"/>
</dbReference>
<dbReference type="GO" id="GO:0031681">
    <property type="term" value="F:G-protein beta-subunit binding"/>
    <property type="evidence" value="ECO:0000250"/>
    <property type="project" value="CAFA"/>
</dbReference>
<dbReference type="GO" id="GO:0003730">
    <property type="term" value="F:mRNA 3'-UTR binding"/>
    <property type="evidence" value="ECO:0007669"/>
    <property type="project" value="Ensembl"/>
</dbReference>
<dbReference type="GO" id="GO:0048027">
    <property type="term" value="F:mRNA 5'-UTR binding"/>
    <property type="evidence" value="ECO:0007669"/>
    <property type="project" value="Ensembl"/>
</dbReference>
<dbReference type="GO" id="GO:0051082">
    <property type="term" value="F:unfolded protein binding"/>
    <property type="evidence" value="ECO:0007669"/>
    <property type="project" value="InterPro"/>
</dbReference>
<dbReference type="GO" id="GO:0007339">
    <property type="term" value="P:binding of sperm to zona pellucida"/>
    <property type="evidence" value="ECO:0007669"/>
    <property type="project" value="Ensembl"/>
</dbReference>
<dbReference type="GO" id="GO:0051086">
    <property type="term" value="P:chaperone mediated protein folding independent of cofactor"/>
    <property type="evidence" value="ECO:0007669"/>
    <property type="project" value="Ensembl"/>
</dbReference>
<dbReference type="GO" id="GO:0032212">
    <property type="term" value="P:positive regulation of telomere maintenance via telomerase"/>
    <property type="evidence" value="ECO:0007669"/>
    <property type="project" value="Ensembl"/>
</dbReference>
<dbReference type="GO" id="GO:0050821">
    <property type="term" value="P:protein stabilization"/>
    <property type="evidence" value="ECO:0007669"/>
    <property type="project" value="Ensembl"/>
</dbReference>
<dbReference type="GO" id="GO:0009615">
    <property type="term" value="P:response to virus"/>
    <property type="evidence" value="ECO:0007669"/>
    <property type="project" value="Ensembl"/>
</dbReference>
<dbReference type="CDD" id="cd03339">
    <property type="entry name" value="TCP1_epsilon"/>
    <property type="match status" value="1"/>
</dbReference>
<dbReference type="FunFam" id="1.10.560.10:FF:000053">
    <property type="entry name" value="T-complex protein 1 subunit delta"/>
    <property type="match status" value="1"/>
</dbReference>
<dbReference type="FunFam" id="3.30.260.10:FF:000028">
    <property type="entry name" value="T-complex protein 1 subunit epsilon"/>
    <property type="match status" value="1"/>
</dbReference>
<dbReference type="FunFam" id="3.50.7.10:FF:000003">
    <property type="entry name" value="T-complex protein 1 subunit epsilon"/>
    <property type="match status" value="1"/>
</dbReference>
<dbReference type="FunFam" id="1.10.560.10:FF:000049">
    <property type="entry name" value="T-complex protein 1 subunitTheta, putative"/>
    <property type="match status" value="1"/>
</dbReference>
<dbReference type="Gene3D" id="3.50.7.10">
    <property type="entry name" value="GroEL"/>
    <property type="match status" value="1"/>
</dbReference>
<dbReference type="Gene3D" id="1.10.560.10">
    <property type="entry name" value="GroEL-like equatorial domain"/>
    <property type="match status" value="1"/>
</dbReference>
<dbReference type="Gene3D" id="3.30.260.10">
    <property type="entry name" value="TCP-1-like chaperonin intermediate domain"/>
    <property type="match status" value="1"/>
</dbReference>
<dbReference type="InterPro" id="IPR012718">
    <property type="entry name" value="Chap_CCT_epsi"/>
</dbReference>
<dbReference type="InterPro" id="IPR017998">
    <property type="entry name" value="Chaperone_TCP-1"/>
</dbReference>
<dbReference type="InterPro" id="IPR002194">
    <property type="entry name" value="Chaperonin_TCP-1_CS"/>
</dbReference>
<dbReference type="InterPro" id="IPR002423">
    <property type="entry name" value="Cpn60/GroEL/TCP-1"/>
</dbReference>
<dbReference type="InterPro" id="IPR027409">
    <property type="entry name" value="GroEL-like_apical_dom_sf"/>
</dbReference>
<dbReference type="InterPro" id="IPR027413">
    <property type="entry name" value="GROEL-like_equatorial_sf"/>
</dbReference>
<dbReference type="InterPro" id="IPR027410">
    <property type="entry name" value="TCP-1-like_intermed_sf"/>
</dbReference>
<dbReference type="InterPro" id="IPR053374">
    <property type="entry name" value="TCP-1_chaperonin"/>
</dbReference>
<dbReference type="InterPro" id="IPR054827">
    <property type="entry name" value="thermosome_alpha"/>
</dbReference>
<dbReference type="NCBIfam" id="TIGR02343">
    <property type="entry name" value="chap_CCT_epsi"/>
    <property type="match status" value="1"/>
</dbReference>
<dbReference type="NCBIfam" id="NF041082">
    <property type="entry name" value="thermosome_alpha"/>
    <property type="match status" value="1"/>
</dbReference>
<dbReference type="NCBIfam" id="NF041083">
    <property type="entry name" value="thermosome_beta"/>
    <property type="match status" value="1"/>
</dbReference>
<dbReference type="PANTHER" id="PTHR11353">
    <property type="entry name" value="CHAPERONIN"/>
    <property type="match status" value="1"/>
</dbReference>
<dbReference type="Pfam" id="PF00118">
    <property type="entry name" value="Cpn60_TCP1"/>
    <property type="match status" value="1"/>
</dbReference>
<dbReference type="PRINTS" id="PR00304">
    <property type="entry name" value="TCOMPLEXTCP1"/>
</dbReference>
<dbReference type="SUPFAM" id="SSF52029">
    <property type="entry name" value="GroEL apical domain-like"/>
    <property type="match status" value="1"/>
</dbReference>
<dbReference type="SUPFAM" id="SSF48592">
    <property type="entry name" value="GroEL equatorial domain-like"/>
    <property type="match status" value="1"/>
</dbReference>
<dbReference type="SUPFAM" id="SSF54849">
    <property type="entry name" value="GroEL-intermediate domain like"/>
    <property type="match status" value="1"/>
</dbReference>
<dbReference type="PROSITE" id="PS00750">
    <property type="entry name" value="TCP1_1"/>
    <property type="match status" value="1"/>
</dbReference>
<dbReference type="PROSITE" id="PS00751">
    <property type="entry name" value="TCP1_2"/>
    <property type="match status" value="1"/>
</dbReference>
<dbReference type="PROSITE" id="PS00995">
    <property type="entry name" value="TCP1_3"/>
    <property type="match status" value="1"/>
</dbReference>
<proteinExistence type="evidence at transcript level"/>
<sequence length="541" mass="59671">MASMGTLAFDEYGRPFLIIKDQDRKSRLMGLEALKSHIMAAKAVANTMRTSLGPNGLDKMMVDKDGDVTVTNDGATILSMMDVDHQIAKLMVELSKSQDDEIGDGTTGVVVLAGALLEEAEQLLDRGIHPIRIADGYEQAARVAIEHLDKISDSVLVDIKDTEPLIQTAKTTLGSKVVNSCHRQMAEIAVNAVLTVADMERRDVDFELIKVEGKVGGRLEDTKLIKGVIVDKDFSHPQMPKKVEDAKIAILTCPFEPPKPKTKHKLDVTSVEDYKALQKYEKEKFEEMIQQIKETGANLAICQWGFDDEANHLLLQNNLPAVRWVGGPEIELIAIATGGRIVPRFSELTAEKLGFAGLVQEISFGTTKDKMLVIEQCKNSRAVTIFIRGGNKMIIEEAKRSLHDALCVIRNLIRDNRVVYGGGAAEISCALAVSQEADKCPTLEQYAMRAFADALEVIPMALSENSGMNPIQTMTEVRARQVKEMNPALGIDCLHKGTNDMKQQHVIETLIGKKQQISLATQMVRMILKIDDIRKPGESEE</sequence>
<accession>Q4R6V2</accession>
<evidence type="ECO:0000250" key="1">
    <source>
        <dbReference type="UniProtKB" id="P48643"/>
    </source>
</evidence>
<evidence type="ECO:0000250" key="2">
    <source>
        <dbReference type="UniProtKB" id="P80316"/>
    </source>
</evidence>
<evidence type="ECO:0000305" key="3"/>
<reference key="1">
    <citation type="submission" date="2005-06" db="EMBL/GenBank/DDBJ databases">
        <title>DNA sequences of macaque genes expressed in brain or testis and its evolutionary implications.</title>
        <authorList>
            <consortium name="International consortium for macaque cDNA sequencing and analysis"/>
        </authorList>
    </citation>
    <scope>NUCLEOTIDE SEQUENCE [LARGE SCALE MRNA]</scope>
    <source>
        <tissue>Testis</tissue>
    </source>
</reference>
<feature type="initiator methionine" description="Removed" evidence="1">
    <location>
        <position position="1"/>
    </location>
</feature>
<feature type="chain" id="PRO_0000260270" description="T-complex protein 1 subunit epsilon">
    <location>
        <begin position="2"/>
        <end position="541"/>
    </location>
</feature>
<feature type="binding site" evidence="1">
    <location>
        <position position="53"/>
    </location>
    <ligand>
        <name>ADP</name>
        <dbReference type="ChEBI" id="CHEBI:456216"/>
    </ligand>
</feature>
<feature type="binding site" evidence="1">
    <location>
        <position position="53"/>
    </location>
    <ligand>
        <name>ATP</name>
        <dbReference type="ChEBI" id="CHEBI:30616"/>
    </ligand>
</feature>
<feature type="binding site" evidence="1">
    <location>
        <position position="104"/>
    </location>
    <ligand>
        <name>Mg(2+)</name>
        <dbReference type="ChEBI" id="CHEBI:18420"/>
    </ligand>
</feature>
<feature type="binding site" evidence="1">
    <location>
        <position position="105"/>
    </location>
    <ligand>
        <name>ADP</name>
        <dbReference type="ChEBI" id="CHEBI:456216"/>
    </ligand>
</feature>
<feature type="binding site" evidence="1">
    <location>
        <position position="106"/>
    </location>
    <ligand>
        <name>ADP</name>
        <dbReference type="ChEBI" id="CHEBI:456216"/>
    </ligand>
</feature>
<feature type="binding site" evidence="1">
    <location>
        <position position="106"/>
    </location>
    <ligand>
        <name>ATP</name>
        <dbReference type="ChEBI" id="CHEBI:30616"/>
    </ligand>
</feature>
<feature type="binding site" evidence="1">
    <location>
        <position position="107"/>
    </location>
    <ligand>
        <name>ADP</name>
        <dbReference type="ChEBI" id="CHEBI:456216"/>
    </ligand>
</feature>
<feature type="binding site" evidence="1">
    <location>
        <position position="107"/>
    </location>
    <ligand>
        <name>ATP</name>
        <dbReference type="ChEBI" id="CHEBI:30616"/>
    </ligand>
</feature>
<feature type="binding site" evidence="1">
    <location>
        <position position="175"/>
    </location>
    <ligand>
        <name>ADP</name>
        <dbReference type="ChEBI" id="CHEBI:456216"/>
    </ligand>
</feature>
<feature type="binding site" evidence="1">
    <location>
        <position position="422"/>
    </location>
    <ligand>
        <name>ADP</name>
        <dbReference type="ChEBI" id="CHEBI:456216"/>
    </ligand>
</feature>
<feature type="binding site" evidence="1">
    <location>
        <position position="422"/>
    </location>
    <ligand>
        <name>ATP</name>
        <dbReference type="ChEBI" id="CHEBI:30616"/>
    </ligand>
</feature>
<feature type="binding site" evidence="1">
    <location>
        <position position="492"/>
    </location>
    <ligand>
        <name>ADP</name>
        <dbReference type="ChEBI" id="CHEBI:456216"/>
    </ligand>
</feature>
<feature type="binding site" evidence="1">
    <location>
        <position position="508"/>
    </location>
    <ligand>
        <name>ADP</name>
        <dbReference type="ChEBI" id="CHEBI:456216"/>
    </ligand>
</feature>
<feature type="binding site" evidence="1">
    <location>
        <position position="513"/>
    </location>
    <ligand>
        <name>ADP</name>
        <dbReference type="ChEBI" id="CHEBI:456216"/>
    </ligand>
</feature>
<feature type="modified residue" description="N-acetylalanine" evidence="1">
    <location>
        <position position="2"/>
    </location>
</feature>
<feature type="modified residue" description="Phosphoserine" evidence="1">
    <location>
        <position position="26"/>
    </location>
</feature>
<feature type="modified residue" description="Phosphoserine" evidence="1">
    <location>
        <position position="346"/>
    </location>
</feature>
<feature type="modified residue" description="Phosphoserine" evidence="1">
    <location>
        <position position="539"/>
    </location>
</feature>
<feature type="cross-link" description="Glycyl lysine isopeptide (Lys-Gly) (interchain with G-Cter in SUMO2)" evidence="1">
    <location>
        <position position="20"/>
    </location>
</feature>
<feature type="cross-link" description="Glycyl lysine isopeptide (Lys-Gly) (interchain with G-Cter in SUMO2)" evidence="1">
    <location>
        <position position="210"/>
    </location>
</feature>
<feature type="cross-link" description="Glycyl lysine isopeptide (Lys-Gly) (interchain with G-Cter in SUMO2)" evidence="1">
    <location>
        <position position="214"/>
    </location>
</feature>
<feature type="cross-link" description="Glycyl lysine isopeptide (Lys-Gly) (interchain with G-Cter in SUMO2)" evidence="1">
    <location>
        <position position="265"/>
    </location>
</feature>
<feature type="cross-link" description="Glycyl lysine isopeptide (Lys-Gly) (interchain with G-Cter in SUMO2)" evidence="1">
    <location>
        <position position="275"/>
    </location>
</feature>
<feature type="cross-link" description="Glycyl lysine isopeptide (Lys-Gly) (interchain with G-Cter in SUMO2)" evidence="1">
    <location>
        <position position="279"/>
    </location>
</feature>
<feature type="cross-link" description="Glycyl lysine isopeptide (Lys-Gly) (interchain with G-Cter in SUMO2)" evidence="1">
    <location>
        <position position="392"/>
    </location>
</feature>
<keyword id="KW-0007">Acetylation</keyword>
<keyword id="KW-0067">ATP-binding</keyword>
<keyword id="KW-0143">Chaperone</keyword>
<keyword id="KW-0963">Cytoplasm</keyword>
<keyword id="KW-0206">Cytoskeleton</keyword>
<keyword id="KW-0378">Hydrolase</keyword>
<keyword id="KW-1017">Isopeptide bond</keyword>
<keyword id="KW-0460">Magnesium</keyword>
<keyword id="KW-0479">Metal-binding</keyword>
<keyword id="KW-0547">Nucleotide-binding</keyword>
<keyword id="KW-0597">Phosphoprotein</keyword>
<keyword id="KW-1185">Reference proteome</keyword>
<keyword id="KW-0832">Ubl conjugation</keyword>
<gene>
    <name type="primary">CCT5</name>
    <name type="ORF">QtsA-17059</name>
</gene>